<name>ATPB_NASOF</name>
<protein>
    <recommendedName>
        <fullName evidence="2">ATP synthase subunit beta, chloroplastic</fullName>
        <ecNumber evidence="2">7.1.2.2</ecNumber>
    </recommendedName>
    <alternativeName>
        <fullName evidence="2">ATP synthase F1 sector subunit beta</fullName>
    </alternativeName>
    <alternativeName>
        <fullName evidence="2">F-ATPase subunit beta</fullName>
    </alternativeName>
</protein>
<keyword id="KW-0066">ATP synthesis</keyword>
<keyword id="KW-0067">ATP-binding</keyword>
<keyword id="KW-0139">CF(1)</keyword>
<keyword id="KW-0150">Chloroplast</keyword>
<keyword id="KW-0375">Hydrogen ion transport</keyword>
<keyword id="KW-0406">Ion transport</keyword>
<keyword id="KW-0472">Membrane</keyword>
<keyword id="KW-0547">Nucleotide-binding</keyword>
<keyword id="KW-0597">Phosphoprotein</keyword>
<keyword id="KW-0934">Plastid</keyword>
<keyword id="KW-0793">Thylakoid</keyword>
<keyword id="KW-1278">Translocase</keyword>
<keyword id="KW-0813">Transport</keyword>
<evidence type="ECO:0000250" key="1">
    <source>
        <dbReference type="UniProtKB" id="P19366"/>
    </source>
</evidence>
<evidence type="ECO:0000255" key="2">
    <source>
        <dbReference type="HAMAP-Rule" id="MF_01347"/>
    </source>
</evidence>
<feature type="chain" id="PRO_0000339630" description="ATP synthase subunit beta, chloroplastic">
    <location>
        <begin position="1"/>
        <end position="498"/>
    </location>
</feature>
<feature type="binding site" evidence="2">
    <location>
        <begin position="172"/>
        <end position="179"/>
    </location>
    <ligand>
        <name>ATP</name>
        <dbReference type="ChEBI" id="CHEBI:30616"/>
    </ligand>
</feature>
<feature type="modified residue" description="Phosphothreonine" evidence="1">
    <location>
        <position position="6"/>
    </location>
</feature>
<feature type="modified residue" description="Phosphoserine" evidence="1">
    <location>
        <position position="13"/>
    </location>
</feature>
<gene>
    <name evidence="2" type="primary">atpB</name>
</gene>
<reference key="1">
    <citation type="submission" date="2007-03" db="EMBL/GenBank/DDBJ databases">
        <title>Sequencing analysis of Nasturtium officinale chloroplast DNA.</title>
        <authorList>
            <person name="Hosouchi T."/>
            <person name="Tsuruoka H."/>
            <person name="Kotani H."/>
        </authorList>
    </citation>
    <scope>NUCLEOTIDE SEQUENCE [LARGE SCALE GENOMIC DNA]</scope>
</reference>
<organism>
    <name type="scientific">Nasturtium officinale</name>
    <name type="common">Watercress</name>
    <name type="synonym">Rorippa nasturtium-aquaticum</name>
    <dbReference type="NCBI Taxonomy" id="65948"/>
    <lineage>
        <taxon>Eukaryota</taxon>
        <taxon>Viridiplantae</taxon>
        <taxon>Streptophyta</taxon>
        <taxon>Embryophyta</taxon>
        <taxon>Tracheophyta</taxon>
        <taxon>Spermatophyta</taxon>
        <taxon>Magnoliopsida</taxon>
        <taxon>eudicotyledons</taxon>
        <taxon>Gunneridae</taxon>
        <taxon>Pentapetalae</taxon>
        <taxon>rosids</taxon>
        <taxon>malvids</taxon>
        <taxon>Brassicales</taxon>
        <taxon>Brassicaceae</taxon>
        <taxon>Cardamineae</taxon>
        <taxon>Nasturtium</taxon>
    </lineage>
</organism>
<geneLocation type="chloroplast"/>
<proteinExistence type="inferred from homology"/>
<dbReference type="EC" id="7.1.2.2" evidence="2"/>
<dbReference type="EMBL" id="AP009376">
    <property type="protein sequence ID" value="BAF50645.1"/>
    <property type="molecule type" value="Genomic_DNA"/>
</dbReference>
<dbReference type="RefSeq" id="YP_001123821.1">
    <property type="nucleotide sequence ID" value="NC_009275.1"/>
</dbReference>
<dbReference type="SMR" id="A4QLU0"/>
<dbReference type="GeneID" id="4962092"/>
<dbReference type="GO" id="GO:0009535">
    <property type="term" value="C:chloroplast thylakoid membrane"/>
    <property type="evidence" value="ECO:0007669"/>
    <property type="project" value="UniProtKB-SubCell"/>
</dbReference>
<dbReference type="GO" id="GO:0005739">
    <property type="term" value="C:mitochondrion"/>
    <property type="evidence" value="ECO:0007669"/>
    <property type="project" value="GOC"/>
</dbReference>
<dbReference type="GO" id="GO:0045259">
    <property type="term" value="C:proton-transporting ATP synthase complex"/>
    <property type="evidence" value="ECO:0007669"/>
    <property type="project" value="UniProtKB-KW"/>
</dbReference>
<dbReference type="GO" id="GO:0005524">
    <property type="term" value="F:ATP binding"/>
    <property type="evidence" value="ECO:0007669"/>
    <property type="project" value="UniProtKB-UniRule"/>
</dbReference>
<dbReference type="GO" id="GO:0016887">
    <property type="term" value="F:ATP hydrolysis activity"/>
    <property type="evidence" value="ECO:0007669"/>
    <property type="project" value="InterPro"/>
</dbReference>
<dbReference type="GO" id="GO:0046933">
    <property type="term" value="F:proton-transporting ATP synthase activity, rotational mechanism"/>
    <property type="evidence" value="ECO:0007669"/>
    <property type="project" value="UniProtKB-UniRule"/>
</dbReference>
<dbReference type="GO" id="GO:0042776">
    <property type="term" value="P:proton motive force-driven mitochondrial ATP synthesis"/>
    <property type="evidence" value="ECO:0007669"/>
    <property type="project" value="TreeGrafter"/>
</dbReference>
<dbReference type="CDD" id="cd18110">
    <property type="entry name" value="ATP-synt_F1_beta_C"/>
    <property type="match status" value="1"/>
</dbReference>
<dbReference type="CDD" id="cd18115">
    <property type="entry name" value="ATP-synt_F1_beta_N"/>
    <property type="match status" value="1"/>
</dbReference>
<dbReference type="CDD" id="cd01133">
    <property type="entry name" value="F1-ATPase_beta_CD"/>
    <property type="match status" value="1"/>
</dbReference>
<dbReference type="FunFam" id="1.10.1140.10:FF:000001">
    <property type="entry name" value="ATP synthase subunit beta"/>
    <property type="match status" value="1"/>
</dbReference>
<dbReference type="FunFam" id="3.40.50.300:FF:000026">
    <property type="entry name" value="ATP synthase subunit beta"/>
    <property type="match status" value="1"/>
</dbReference>
<dbReference type="FunFam" id="2.40.10.170:FF:000002">
    <property type="entry name" value="ATP synthase subunit beta, chloroplastic"/>
    <property type="match status" value="1"/>
</dbReference>
<dbReference type="Gene3D" id="2.40.10.170">
    <property type="match status" value="1"/>
</dbReference>
<dbReference type="Gene3D" id="1.10.1140.10">
    <property type="entry name" value="Bovine Mitochondrial F1-atpase, Atp Synthase Beta Chain, Chain D, domain 3"/>
    <property type="match status" value="1"/>
</dbReference>
<dbReference type="Gene3D" id="3.40.50.300">
    <property type="entry name" value="P-loop containing nucleotide triphosphate hydrolases"/>
    <property type="match status" value="1"/>
</dbReference>
<dbReference type="HAMAP" id="MF_01347">
    <property type="entry name" value="ATP_synth_beta_bact"/>
    <property type="match status" value="1"/>
</dbReference>
<dbReference type="InterPro" id="IPR003593">
    <property type="entry name" value="AAA+_ATPase"/>
</dbReference>
<dbReference type="InterPro" id="IPR055190">
    <property type="entry name" value="ATP-synt_VA_C"/>
</dbReference>
<dbReference type="InterPro" id="IPR005722">
    <property type="entry name" value="ATP_synth_F1_bsu"/>
</dbReference>
<dbReference type="InterPro" id="IPR020003">
    <property type="entry name" value="ATPase_a/bsu_AS"/>
</dbReference>
<dbReference type="InterPro" id="IPR050053">
    <property type="entry name" value="ATPase_alpha/beta_chains"/>
</dbReference>
<dbReference type="InterPro" id="IPR004100">
    <property type="entry name" value="ATPase_F1/V1/A1_a/bsu_N"/>
</dbReference>
<dbReference type="InterPro" id="IPR036121">
    <property type="entry name" value="ATPase_F1/V1/A1_a/bsu_N_sf"/>
</dbReference>
<dbReference type="InterPro" id="IPR000194">
    <property type="entry name" value="ATPase_F1/V1/A1_a/bsu_nucl-bd"/>
</dbReference>
<dbReference type="InterPro" id="IPR024034">
    <property type="entry name" value="ATPase_F1/V1_b/a_C"/>
</dbReference>
<dbReference type="InterPro" id="IPR027417">
    <property type="entry name" value="P-loop_NTPase"/>
</dbReference>
<dbReference type="NCBIfam" id="TIGR01039">
    <property type="entry name" value="atpD"/>
    <property type="match status" value="1"/>
</dbReference>
<dbReference type="PANTHER" id="PTHR15184">
    <property type="entry name" value="ATP SYNTHASE"/>
    <property type="match status" value="1"/>
</dbReference>
<dbReference type="PANTHER" id="PTHR15184:SF71">
    <property type="entry name" value="ATP SYNTHASE SUBUNIT BETA, MITOCHONDRIAL"/>
    <property type="match status" value="1"/>
</dbReference>
<dbReference type="Pfam" id="PF00006">
    <property type="entry name" value="ATP-synt_ab"/>
    <property type="match status" value="1"/>
</dbReference>
<dbReference type="Pfam" id="PF02874">
    <property type="entry name" value="ATP-synt_ab_N"/>
    <property type="match status" value="1"/>
</dbReference>
<dbReference type="Pfam" id="PF22919">
    <property type="entry name" value="ATP-synt_VA_C"/>
    <property type="match status" value="1"/>
</dbReference>
<dbReference type="SMART" id="SM00382">
    <property type="entry name" value="AAA"/>
    <property type="match status" value="1"/>
</dbReference>
<dbReference type="SUPFAM" id="SSF47917">
    <property type="entry name" value="C-terminal domain of alpha and beta subunits of F1 ATP synthase"/>
    <property type="match status" value="1"/>
</dbReference>
<dbReference type="SUPFAM" id="SSF50615">
    <property type="entry name" value="N-terminal domain of alpha and beta subunits of F1 ATP synthase"/>
    <property type="match status" value="1"/>
</dbReference>
<dbReference type="SUPFAM" id="SSF52540">
    <property type="entry name" value="P-loop containing nucleoside triphosphate hydrolases"/>
    <property type="match status" value="1"/>
</dbReference>
<dbReference type="PROSITE" id="PS00152">
    <property type="entry name" value="ATPASE_ALPHA_BETA"/>
    <property type="match status" value="1"/>
</dbReference>
<accession>A4QLU0</accession>
<comment type="function">
    <text evidence="2">Produces ATP from ADP in the presence of a proton gradient across the membrane. The catalytic sites are hosted primarily by the beta subunits.</text>
</comment>
<comment type="catalytic activity">
    <reaction evidence="2">
        <text>ATP + H2O + 4 H(+)(in) = ADP + phosphate + 5 H(+)(out)</text>
        <dbReference type="Rhea" id="RHEA:57720"/>
        <dbReference type="ChEBI" id="CHEBI:15377"/>
        <dbReference type="ChEBI" id="CHEBI:15378"/>
        <dbReference type="ChEBI" id="CHEBI:30616"/>
        <dbReference type="ChEBI" id="CHEBI:43474"/>
        <dbReference type="ChEBI" id="CHEBI:456216"/>
        <dbReference type="EC" id="7.1.2.2"/>
    </reaction>
</comment>
<comment type="subunit">
    <text evidence="2">F-type ATPases have 2 components, CF(1) - the catalytic core - and CF(0) - the membrane proton channel. CF(1) has five subunits: alpha(3), beta(3), gamma(1), delta(1), epsilon(1). CF(0) has four main subunits: a(1), b(1), b'(1) and c(9-12).</text>
</comment>
<comment type="subcellular location">
    <subcellularLocation>
        <location evidence="2">Plastid</location>
        <location evidence="2">Chloroplast thylakoid membrane</location>
        <topology evidence="2">Peripheral membrane protein</topology>
    </subcellularLocation>
</comment>
<comment type="similarity">
    <text evidence="2">Belongs to the ATPase alpha/beta chains family.</text>
</comment>
<sequence>MRINLTTSDPEVSIREKKNLGRIAQIIGPVLDVAFPPGKMPNIYNALVVKGRDTLGQEINVTCEVQQLLGNNRVRAVAMSATEGLKRGMDVVDMGSPLSVPVGGATLGRIFNVLGEPVDNLGPVDTRTTSPIHKSAPAFIQLDTKLSIFETGIKVVDLLAPYRRGGKIGLFGGAGVGKTVLIMELINNIAKAHGGVSVFGGVGERTREGNDLYMEMKESGVINEQNLAESKVALVYGQMNEPPGARMRVGLTALTMAEYFRDVNEQDVLLFIDNIFRFVQAGSEVSALLGRMPSAVGYQPTLSTEMGTLQERITSTKKGSITSIQAVYVPADDLTDPAPATTFAHLDATTVLSRGLAAKGIYPAVDPLDSTSTMLQPRIVGEEHYETAQQVKQTLQRYKELQDIIAILGLDELSEEDRLTVARARKIERFLSQPFFVAEVFTGSPGKYVGLAETIRGFKLILSGEFDSLPEQAFYLVGNIDEATAKATNLEMESKLKK</sequence>